<keyword id="KW-0007">Acetylation</keyword>
<keyword id="KW-0235">DNA replication</keyword>
<keyword id="KW-0238">DNA-binding</keyword>
<keyword id="KW-0539">Nucleus</keyword>
<keyword id="KW-0597">Phosphoprotein</keyword>
<keyword id="KW-1185">Reference proteome</keyword>
<dbReference type="EMBL" id="BC026795">
    <property type="protein sequence ID" value="AAH26795.1"/>
    <property type="molecule type" value="mRNA"/>
</dbReference>
<dbReference type="CCDS" id="CCDS39413.1"/>
<dbReference type="RefSeq" id="NP_081285.1">
    <property type="nucleotide sequence ID" value="NM_027009.3"/>
</dbReference>
<dbReference type="SMR" id="Q8R323"/>
<dbReference type="BioGRID" id="213324">
    <property type="interactions" value="11"/>
</dbReference>
<dbReference type="ComplexPortal" id="CPX-472">
    <property type="entry name" value="DNA replication factor C complex"/>
</dbReference>
<dbReference type="CORUM" id="Q8R323"/>
<dbReference type="FunCoup" id="Q8R323">
    <property type="interactions" value="3141"/>
</dbReference>
<dbReference type="IntAct" id="Q8R323">
    <property type="interactions" value="3"/>
</dbReference>
<dbReference type="STRING" id="10090.ENSMUSP00000039621"/>
<dbReference type="GlyGen" id="Q8R323">
    <property type="glycosylation" value="1 site, 1 O-linked glycan (1 site)"/>
</dbReference>
<dbReference type="iPTMnet" id="Q8R323"/>
<dbReference type="PhosphoSitePlus" id="Q8R323"/>
<dbReference type="PaxDb" id="10090-ENSMUSP00000039621"/>
<dbReference type="ProteomicsDB" id="253226"/>
<dbReference type="Pumba" id="Q8R323"/>
<dbReference type="Antibodypedia" id="7909">
    <property type="antibodies" value="268 antibodies from 33 providers"/>
</dbReference>
<dbReference type="Ensembl" id="ENSMUST00000038131.10">
    <property type="protein sequence ID" value="ENSMUSP00000039621.10"/>
    <property type="gene ID" value="ENSMUSG00000033970.16"/>
</dbReference>
<dbReference type="GeneID" id="69263"/>
<dbReference type="KEGG" id="mmu:69263"/>
<dbReference type="UCSC" id="uc009aus.1">
    <property type="organism name" value="mouse"/>
</dbReference>
<dbReference type="AGR" id="MGI:1916513"/>
<dbReference type="CTD" id="5983"/>
<dbReference type="MGI" id="MGI:1916513">
    <property type="gene designation" value="Rfc3"/>
</dbReference>
<dbReference type="VEuPathDB" id="HostDB:ENSMUSG00000033970"/>
<dbReference type="eggNOG" id="KOG2035">
    <property type="taxonomic scope" value="Eukaryota"/>
</dbReference>
<dbReference type="GeneTree" id="ENSGT00550000075006"/>
<dbReference type="HOGENOM" id="CLU_042324_5_0_1"/>
<dbReference type="InParanoid" id="Q8R323"/>
<dbReference type="OMA" id="LKADIMH"/>
<dbReference type="OrthoDB" id="761538at2759"/>
<dbReference type="PhylomeDB" id="Q8R323"/>
<dbReference type="TreeFam" id="TF105724"/>
<dbReference type="Reactome" id="R-MMU-110312">
    <property type="pathway name" value="Translesion synthesis by REV1"/>
</dbReference>
<dbReference type="Reactome" id="R-MMU-110314">
    <property type="pathway name" value="Recognition of DNA damage by PCNA-containing replication complex"/>
</dbReference>
<dbReference type="Reactome" id="R-MMU-110320">
    <property type="pathway name" value="Translesion Synthesis by POLH"/>
</dbReference>
<dbReference type="Reactome" id="R-MMU-174411">
    <property type="pathway name" value="Polymerase switching on the C-strand of the telomere"/>
</dbReference>
<dbReference type="Reactome" id="R-MMU-176187">
    <property type="pathway name" value="Activation of ATR in response to replication stress"/>
</dbReference>
<dbReference type="Reactome" id="R-MMU-5651801">
    <property type="pathway name" value="PCNA-Dependent Long Patch Base Excision Repair"/>
</dbReference>
<dbReference type="Reactome" id="R-MMU-5655862">
    <property type="pathway name" value="Translesion synthesis by POLK"/>
</dbReference>
<dbReference type="Reactome" id="R-MMU-5656121">
    <property type="pathway name" value="Translesion synthesis by POLI"/>
</dbReference>
<dbReference type="Reactome" id="R-MMU-5656169">
    <property type="pathway name" value="Termination of translesion DNA synthesis"/>
</dbReference>
<dbReference type="Reactome" id="R-MMU-5685938">
    <property type="pathway name" value="HDR through Single Strand Annealing (SSA)"/>
</dbReference>
<dbReference type="Reactome" id="R-MMU-5685942">
    <property type="pathway name" value="HDR through Homologous Recombination (HRR)"/>
</dbReference>
<dbReference type="Reactome" id="R-MMU-5693607">
    <property type="pathway name" value="Processing of DNA double-strand break ends"/>
</dbReference>
<dbReference type="Reactome" id="R-MMU-5696397">
    <property type="pathway name" value="Gap-filling DNA repair synthesis and ligation in GG-NER"/>
</dbReference>
<dbReference type="Reactome" id="R-MMU-5696400">
    <property type="pathway name" value="Dual Incision in GG-NER"/>
</dbReference>
<dbReference type="Reactome" id="R-MMU-6782135">
    <property type="pathway name" value="Dual incision in TC-NER"/>
</dbReference>
<dbReference type="Reactome" id="R-MMU-6782210">
    <property type="pathway name" value="Gap-filling DNA repair synthesis and ligation in TC-NER"/>
</dbReference>
<dbReference type="Reactome" id="R-MMU-6804756">
    <property type="pathway name" value="Regulation of TP53 Activity through Phosphorylation"/>
</dbReference>
<dbReference type="Reactome" id="R-MMU-69091">
    <property type="pathway name" value="Polymerase switching"/>
</dbReference>
<dbReference type="Reactome" id="R-MMU-69473">
    <property type="pathway name" value="G2/M DNA damage checkpoint"/>
</dbReference>
<dbReference type="BioGRID-ORCS" id="69263">
    <property type="hits" value="28 hits in 78 CRISPR screens"/>
</dbReference>
<dbReference type="PRO" id="PR:Q8R323"/>
<dbReference type="Proteomes" id="UP000000589">
    <property type="component" value="Chromosome 5"/>
</dbReference>
<dbReference type="RNAct" id="Q8R323">
    <property type="molecule type" value="protein"/>
</dbReference>
<dbReference type="Bgee" id="ENSMUSG00000033970">
    <property type="expression patterns" value="Expressed in medial ganglionic eminence and 253 other cell types or tissues"/>
</dbReference>
<dbReference type="ExpressionAtlas" id="Q8R323">
    <property type="expression patterns" value="baseline and differential"/>
</dbReference>
<dbReference type="GO" id="GO:0031390">
    <property type="term" value="C:Ctf18 RFC-like complex"/>
    <property type="evidence" value="ECO:0000250"/>
    <property type="project" value="UniProtKB"/>
</dbReference>
<dbReference type="GO" id="GO:0005663">
    <property type="term" value="C:DNA replication factor C complex"/>
    <property type="evidence" value="ECO:0000266"/>
    <property type="project" value="ComplexPortal"/>
</dbReference>
<dbReference type="GO" id="GO:0016887">
    <property type="term" value="F:ATP hydrolysis activity"/>
    <property type="evidence" value="ECO:0007669"/>
    <property type="project" value="InterPro"/>
</dbReference>
<dbReference type="GO" id="GO:0003677">
    <property type="term" value="F:DNA binding"/>
    <property type="evidence" value="ECO:0007669"/>
    <property type="project" value="UniProtKB-KW"/>
</dbReference>
<dbReference type="GO" id="GO:0003689">
    <property type="term" value="F:DNA clamp loader activity"/>
    <property type="evidence" value="ECO:0007669"/>
    <property type="project" value="Ensembl"/>
</dbReference>
<dbReference type="GO" id="GO:0017116">
    <property type="term" value="F:single-stranded DNA helicase activity"/>
    <property type="evidence" value="ECO:0007669"/>
    <property type="project" value="Ensembl"/>
</dbReference>
<dbReference type="GO" id="GO:0006261">
    <property type="term" value="P:DNA-templated DNA replication"/>
    <property type="evidence" value="ECO:0000266"/>
    <property type="project" value="ComplexPortal"/>
</dbReference>
<dbReference type="GO" id="GO:1900264">
    <property type="term" value="P:positive regulation of DNA-directed DNA polymerase activity"/>
    <property type="evidence" value="ECO:0000250"/>
    <property type="project" value="UniProtKB"/>
</dbReference>
<dbReference type="CDD" id="cd00009">
    <property type="entry name" value="AAA"/>
    <property type="match status" value="1"/>
</dbReference>
<dbReference type="FunFam" id="1.20.272.10:FF:000002">
    <property type="entry name" value="Replication factor C subunit 3"/>
    <property type="match status" value="1"/>
</dbReference>
<dbReference type="FunFam" id="1.10.8.60:FF:000030">
    <property type="entry name" value="replication factor C subunit 3"/>
    <property type="match status" value="1"/>
</dbReference>
<dbReference type="FunFam" id="3.40.50.300:FF:000136">
    <property type="entry name" value="Replication factor C subunit 5"/>
    <property type="match status" value="1"/>
</dbReference>
<dbReference type="Gene3D" id="1.10.8.60">
    <property type="match status" value="1"/>
</dbReference>
<dbReference type="Gene3D" id="1.20.272.10">
    <property type="match status" value="1"/>
</dbReference>
<dbReference type="Gene3D" id="3.40.50.300">
    <property type="entry name" value="P-loop containing nucleotide triphosphate hydrolases"/>
    <property type="match status" value="1"/>
</dbReference>
<dbReference type="InterPro" id="IPR003593">
    <property type="entry name" value="AAA+_ATPase"/>
</dbReference>
<dbReference type="InterPro" id="IPR008921">
    <property type="entry name" value="DNA_pol3_clamp-load_cplx_C"/>
</dbReference>
<dbReference type="InterPro" id="IPR050238">
    <property type="entry name" value="DNA_Rep/Repair_Clamp_Loader"/>
</dbReference>
<dbReference type="InterPro" id="IPR027417">
    <property type="entry name" value="P-loop_NTPase"/>
</dbReference>
<dbReference type="PANTHER" id="PTHR11669">
    <property type="entry name" value="REPLICATION FACTOR C / DNA POLYMERASE III GAMMA-TAU SUBUNIT"/>
    <property type="match status" value="1"/>
</dbReference>
<dbReference type="PANTHER" id="PTHR11669:SF1">
    <property type="entry name" value="REPLICATION FACTOR C SUBUNIT 3"/>
    <property type="match status" value="1"/>
</dbReference>
<dbReference type="Pfam" id="PF13177">
    <property type="entry name" value="DNA_pol3_delta2"/>
    <property type="match status" value="1"/>
</dbReference>
<dbReference type="Pfam" id="PF21960">
    <property type="entry name" value="RCF1-5-like_lid"/>
    <property type="match status" value="1"/>
</dbReference>
<dbReference type="Pfam" id="PF22534">
    <property type="entry name" value="RFC_C"/>
    <property type="match status" value="1"/>
</dbReference>
<dbReference type="SMART" id="SM00382">
    <property type="entry name" value="AAA"/>
    <property type="match status" value="1"/>
</dbReference>
<dbReference type="SUPFAM" id="SSF52540">
    <property type="entry name" value="P-loop containing nucleoside triphosphate hydrolases"/>
    <property type="match status" value="1"/>
</dbReference>
<dbReference type="SUPFAM" id="SSF48019">
    <property type="entry name" value="post-AAA+ oligomerization domain-like"/>
    <property type="match status" value="1"/>
</dbReference>
<comment type="function">
    <text evidence="1">Subunit of the replication factor C (RFC) complex which acts during elongation of primed DNA templates by DNA polymerases delta and epsilon, and is necessary for ATP-dependent loading of proliferating cell nuclear antigen (PCNA) onto primed DNA.</text>
</comment>
<comment type="subunit">
    <text evidence="1 2">Subunit of the RFC complex, an heteropentameric complex consisting of a large subunit RFC1 and four small subunits RFC2, RFC3, RFC4 and RFC5; the RFC complex interacts with PCNA. Forms an heterotetrameric complex with RFC2, RFC4 and RFC5; this complex has ATPase activity but is not stimulated by PCNA. The heterotetramer of subunits RFC2, RFC3, RFC4 and RFC5 interacts with RAD17 (By similarity). Interacts with CNTD1; this interaction facilitates crossover formation (PubMed:32640224).</text>
</comment>
<comment type="subcellular location">
    <subcellularLocation>
        <location evidence="3">Nucleus</location>
    </subcellularLocation>
</comment>
<comment type="similarity">
    <text evidence="3">Belongs to the activator 1 small subunits family.</text>
</comment>
<accession>Q8R323</accession>
<organism>
    <name type="scientific">Mus musculus</name>
    <name type="common">Mouse</name>
    <dbReference type="NCBI Taxonomy" id="10090"/>
    <lineage>
        <taxon>Eukaryota</taxon>
        <taxon>Metazoa</taxon>
        <taxon>Chordata</taxon>
        <taxon>Craniata</taxon>
        <taxon>Vertebrata</taxon>
        <taxon>Euteleostomi</taxon>
        <taxon>Mammalia</taxon>
        <taxon>Eutheria</taxon>
        <taxon>Euarchontoglires</taxon>
        <taxon>Glires</taxon>
        <taxon>Rodentia</taxon>
        <taxon>Myomorpha</taxon>
        <taxon>Muroidea</taxon>
        <taxon>Muridae</taxon>
        <taxon>Murinae</taxon>
        <taxon>Mus</taxon>
        <taxon>Mus</taxon>
    </lineage>
</organism>
<sequence length="356" mass="40526">MSLWVDKYRPSSLARLDYHKEQAAQLRNLVQCGDFPHLLVYGPSGAGKKTRIMCILRELYGIGVEKLRIEHQTITTPSKKKIEISTIASNYHLEVNPSDAGNSDRVVIQEMLKTVAQSQQLETSSQRDFKVVLLTEVDKLTKDAQHALRRTMEKYMSTCRLILCCNSTSKVIPPIRSRCLAVRVPAPSIEDICSVLSTVCRKEGLALPSTLARRLAEKSCRNLRKALLMCEACRVQQYPFTEDQEIPETDWEVYLRETANAIVSQQTPQRLLEVRGRLYELLTHCIPPEIIMKGLLSELLHNCDGQLKGEVAQMAAYYEHRLQLGSKAIYHLEAFVAKFMALYKKFMEDGLEGMMF</sequence>
<evidence type="ECO:0000250" key="1">
    <source>
        <dbReference type="UniProtKB" id="P40938"/>
    </source>
</evidence>
<evidence type="ECO:0000269" key="2">
    <source>
    </source>
</evidence>
<evidence type="ECO:0000305" key="3"/>
<protein>
    <recommendedName>
        <fullName>Replication factor C subunit 3</fullName>
    </recommendedName>
    <alternativeName>
        <fullName>Activator 1 38 kDa subunit</fullName>
        <shortName>A1 38 kDa subunit</shortName>
    </alternativeName>
    <alternativeName>
        <fullName>Activator 1 subunit 3</fullName>
    </alternativeName>
    <alternativeName>
        <fullName>Replication factor C 38 kDa subunit</fullName>
        <shortName>RF-C 38 kDa subunit</shortName>
        <shortName>RFC38</shortName>
    </alternativeName>
</protein>
<proteinExistence type="evidence at protein level"/>
<gene>
    <name type="primary">Rfc3</name>
</gene>
<reference key="1">
    <citation type="journal article" date="2004" name="Genome Res.">
        <title>The status, quality, and expansion of the NIH full-length cDNA project: the Mammalian Gene Collection (MGC).</title>
        <authorList>
            <consortium name="The MGC Project Team"/>
        </authorList>
    </citation>
    <scope>NUCLEOTIDE SEQUENCE [LARGE SCALE MRNA]</scope>
</reference>
<reference key="2">
    <citation type="journal article" date="2010" name="Cell">
        <title>A tissue-specific atlas of mouse protein phosphorylation and expression.</title>
        <authorList>
            <person name="Huttlin E.L."/>
            <person name="Jedrychowski M.P."/>
            <person name="Elias J.E."/>
            <person name="Goswami T."/>
            <person name="Rad R."/>
            <person name="Beausoleil S.A."/>
            <person name="Villen J."/>
            <person name="Haas W."/>
            <person name="Sowa M.E."/>
            <person name="Gygi S.P."/>
        </authorList>
    </citation>
    <scope>IDENTIFICATION BY MASS SPECTROMETRY [LARGE SCALE ANALYSIS]</scope>
    <source>
        <tissue>Kidney</tissue>
        <tissue>Lung</tissue>
        <tissue>Pancreas</tissue>
        <tissue>Spleen</tissue>
        <tissue>Testis</tissue>
    </source>
</reference>
<reference key="3">
    <citation type="journal article" date="2020" name="Cell Rep.">
        <title>Cyclin N-Terminal Domain-Containing-1 Coordinates Meiotic Crossover Formation with Cell-Cycle Progression in a Cyclin-Independent Manner.</title>
        <authorList>
            <person name="Gray S."/>
            <person name="Santiago E.R."/>
            <person name="Chappie J.S."/>
            <person name="Cohen P.E."/>
        </authorList>
    </citation>
    <scope>INTERACTION WITH CNTD1</scope>
</reference>
<feature type="chain" id="PRO_0000121762" description="Replication factor C subunit 3">
    <location>
        <begin position="1"/>
        <end position="356"/>
    </location>
</feature>
<feature type="modified residue" description="N6-acetyllysine" evidence="1">
    <location>
        <position position="20"/>
    </location>
</feature>
<feature type="modified residue" description="Phosphoserine" evidence="1">
    <location>
        <position position="125"/>
    </location>
</feature>
<name>RFC3_MOUSE</name>